<comment type="function">
    <text>This heat stable bacteriocin shows activity against species of Lactobacillus, Listeria monocytogenes, Pediococcus, Enterococcus, Leuconostoc and Lactococcus.</text>
</comment>
<comment type="subcellular location">
    <subcellularLocation>
        <location>Secreted</location>
    </subcellularLocation>
</comment>
<comment type="similarity">
    <text evidence="1">Belongs to the bacteriocin class IIA/YGNGV family.</text>
</comment>
<name>BAVA_LATSK</name>
<protein>
    <recommendedName>
        <fullName>Bacteriocin bavaricin-A</fullName>
    </recommendedName>
</protein>
<reference key="1">
    <citation type="journal article" date="1993" name="J. Appl. Bacteriol.">
        <title>Antimicrobial activity of lactic acid bacteria isolated from sour doughs: purification and characterization of bavaricin A, a bacteriocin produced by Lactobacillus bavaricus MI401.</title>
        <authorList>
            <person name="Larsen A.G."/>
            <person name="Vogensen F.K."/>
            <person name="Josephsen J."/>
        </authorList>
    </citation>
    <scope>PROTEIN SEQUENCE</scope>
    <source>
        <strain>Bavaricus / MI401</strain>
    </source>
</reference>
<dbReference type="GO" id="GO:0005576">
    <property type="term" value="C:extracellular region"/>
    <property type="evidence" value="ECO:0007669"/>
    <property type="project" value="UniProtKB-SubCell"/>
</dbReference>
<dbReference type="GO" id="GO:0042742">
    <property type="term" value="P:defense response to bacterium"/>
    <property type="evidence" value="ECO:0007669"/>
    <property type="project" value="UniProtKB-KW"/>
</dbReference>
<dbReference type="GO" id="GO:0031640">
    <property type="term" value="P:killing of cells of another organism"/>
    <property type="evidence" value="ECO:0007669"/>
    <property type="project" value="UniProtKB-KW"/>
</dbReference>
<dbReference type="Gene3D" id="1.20.5.130">
    <property type="match status" value="1"/>
</dbReference>
<dbReference type="InterPro" id="IPR023388">
    <property type="entry name" value="Bacteriocin_IIa_dom_sf"/>
</dbReference>
<organism>
    <name type="scientific">Latilactobacillus sakei</name>
    <name type="common">Lactobacillus sakei</name>
    <dbReference type="NCBI Taxonomy" id="1599"/>
    <lineage>
        <taxon>Bacteria</taxon>
        <taxon>Bacillati</taxon>
        <taxon>Bacillota</taxon>
        <taxon>Bacilli</taxon>
        <taxon>Lactobacillales</taxon>
        <taxon>Lactobacillaceae</taxon>
        <taxon>Latilactobacillus</taxon>
    </lineage>
</organism>
<keyword id="KW-0044">Antibiotic</keyword>
<keyword id="KW-0929">Antimicrobial</keyword>
<keyword id="KW-0078">Bacteriocin</keyword>
<keyword id="KW-0903">Direct protein sequencing</keyword>
<keyword id="KW-0964">Secreted</keyword>
<proteinExistence type="evidence at protein level"/>
<accession>P80953</accession>
<feature type="peptide" id="PRO_0000110573" description="Bacteriocin bavaricin-A">
    <location>
        <begin position="1"/>
        <end position="41"/>
    </location>
</feature>
<feature type="unsure residue" description="K or D">
    <location>
        <position position="1"/>
    </location>
</feature>
<feature type="unsure residue" description="G or N">
    <location>
        <position position="41"/>
    </location>
</feature>
<evidence type="ECO:0000305" key="1"/>
<sequence>KYYGNGVHXGKHSXTVDWGTAIGNIGNNAAANXATGXNAGG</sequence>